<organismHost>
    <name type="scientific">Lepidoptera</name>
    <name type="common">butterflies and moths</name>
    <dbReference type="NCBI Taxonomy" id="7088"/>
</organismHost>
<sequence length="245" mass="28705">MPDYSYRPTIGRTYVYDNKYYKNLGSVIKNAKRKKHLLEHQEEEKSLDGLDHYIVAEDPFLGPGKNQKLTLFKEIRNVKPDTMKLIVNWSGKEFLRETWTRFVEDSFPIVNDQEVMDVFLVINLRPTRPNRCYKFLAQHALRWDCDYVPHEVIRIVEPSYVGMNNEYRISLAKKGGGCPIMNIHSEYTNSFESFVNRVIWENFYKPIVYIGTDSGEEEEILIEVSLVFKVKEFAPDAPLFTGPAY</sequence>
<dbReference type="EMBL" id="Y17753">
    <property type="protein sequence ID" value="CAA76844.1"/>
    <property type="molecule type" value="Genomic_DNA"/>
</dbReference>
<dbReference type="PIR" id="JQ1607">
    <property type="entry name" value="JQ1607"/>
</dbReference>
<dbReference type="SMR" id="P81472"/>
<dbReference type="GO" id="GO:0039679">
    <property type="term" value="C:viral occlusion body"/>
    <property type="evidence" value="ECO:0007669"/>
    <property type="project" value="UniProtKB-KW"/>
</dbReference>
<dbReference type="GO" id="GO:0005198">
    <property type="term" value="F:structural molecule activity"/>
    <property type="evidence" value="ECO:0007669"/>
    <property type="project" value="InterPro"/>
</dbReference>
<dbReference type="InterPro" id="IPR001746">
    <property type="entry name" value="Polyhedrin"/>
</dbReference>
<dbReference type="Pfam" id="PF00738">
    <property type="entry name" value="Polyhedrin"/>
    <property type="match status" value="1"/>
</dbReference>
<protein>
    <recommendedName>
        <fullName>Polyhedrin</fullName>
    </recommendedName>
    <alternativeName>
        <fullName>Major occlusion protein</fullName>
    </alternativeName>
</protein>
<comment type="function">
    <text>Major component of the virus occlusion bodies, which are large proteinaceous structures (polyhedra), that protect the virus from the outside environment for extended periods until they are ingested by insect larvae.</text>
</comment>
<comment type="similarity">
    <text evidence="1">Belongs to the polyhedrin family.</text>
</comment>
<proteinExistence type="inferred from homology"/>
<organism>
    <name type="scientific">Anticarsia gemmatalis nuclear polyhedrosis virus</name>
    <name type="common">AgMNPV</name>
    <dbReference type="NCBI Taxonomy" id="31507"/>
    <lineage>
        <taxon>Viruses</taxon>
        <taxon>Viruses incertae sedis</taxon>
        <taxon>Naldaviricetes</taxon>
        <taxon>Lefavirales</taxon>
        <taxon>Baculoviridae</taxon>
        <taxon>Alphabaculovirus</taxon>
    </lineage>
</organism>
<name>PYHD_NPVAG</name>
<reference key="1">
    <citation type="journal article" date="1992" name="J. Gen. Virol.">
        <title>The Anticarsia gemmatalis nuclear polyhedrosis virus polyhedrin gene region: sequence analysis, gene product and structural comparisons.</title>
        <authorList>
            <person name="Zanotto P.M.A."/>
            <person name="Sampaio M.J.A."/>
            <person name="Johnson D.W."/>
            <person name="Rocha T.L."/>
            <person name="Maruniak J.E."/>
        </authorList>
    </citation>
    <scope>NUCLEOTIDE SEQUENCE [GENOMIC DNA]</scope>
    <source>
        <strain>2D</strain>
    </source>
</reference>
<keyword id="KW-0842">Viral occlusion body</keyword>
<accession>P81472</accession>
<feature type="chain" id="PRO_0000217244" description="Polyhedrin">
    <location>
        <begin position="1"/>
        <end position="245"/>
    </location>
</feature>
<evidence type="ECO:0000305" key="1"/>